<protein>
    <recommendedName>
        <fullName evidence="1">Potassium-transporting ATPase KdpC subunit</fullName>
    </recommendedName>
    <alternativeName>
        <fullName evidence="1">ATP phosphohydrolase [potassium-transporting] C chain</fullName>
    </alternativeName>
    <alternativeName>
        <fullName evidence="1">Potassium-binding and translocating subunit C</fullName>
    </alternativeName>
    <alternativeName>
        <fullName evidence="1">Potassium-translocating ATPase C chain</fullName>
    </alternativeName>
</protein>
<keyword id="KW-0067">ATP-binding</keyword>
<keyword id="KW-1003">Cell membrane</keyword>
<keyword id="KW-0406">Ion transport</keyword>
<keyword id="KW-0472">Membrane</keyword>
<keyword id="KW-0547">Nucleotide-binding</keyword>
<keyword id="KW-0630">Potassium</keyword>
<keyword id="KW-0633">Potassium transport</keyword>
<keyword id="KW-1185">Reference proteome</keyword>
<keyword id="KW-0812">Transmembrane</keyword>
<keyword id="KW-1133">Transmembrane helix</keyword>
<keyword id="KW-0813">Transport</keyword>
<reference key="1">
    <citation type="journal article" date="2003" name="Nature">
        <title>Genome sequence of Bacillus cereus and comparative analysis with Bacillus anthracis.</title>
        <authorList>
            <person name="Ivanova N."/>
            <person name="Sorokin A."/>
            <person name="Anderson I."/>
            <person name="Galleron N."/>
            <person name="Candelon B."/>
            <person name="Kapatral V."/>
            <person name="Bhattacharyya A."/>
            <person name="Reznik G."/>
            <person name="Mikhailova N."/>
            <person name="Lapidus A."/>
            <person name="Chu L."/>
            <person name="Mazur M."/>
            <person name="Goltsman E."/>
            <person name="Larsen N."/>
            <person name="D'Souza M."/>
            <person name="Walunas T."/>
            <person name="Grechkin Y."/>
            <person name="Pusch G."/>
            <person name="Haselkorn R."/>
            <person name="Fonstein M."/>
            <person name="Ehrlich S.D."/>
            <person name="Overbeek R."/>
            <person name="Kyrpides N.C."/>
        </authorList>
    </citation>
    <scope>NUCLEOTIDE SEQUENCE [LARGE SCALE GENOMIC DNA]</scope>
    <source>
        <strain>ATCC 14579 / DSM 31 / CCUG 7414 / JCM 2152 / NBRC 15305 / NCIMB 9373 / NCTC 2599 / NRRL B-3711</strain>
    </source>
</reference>
<feature type="chain" id="PRO_1000022258" description="Potassium-transporting ATPase KdpC subunit">
    <location>
        <begin position="1"/>
        <end position="193"/>
    </location>
</feature>
<feature type="transmembrane region" description="Helical" evidence="1">
    <location>
        <begin position="14"/>
        <end position="34"/>
    </location>
</feature>
<accession>Q81HP9</accession>
<gene>
    <name evidence="1" type="primary">kdpC</name>
    <name type="ordered locus">BC_0755</name>
</gene>
<evidence type="ECO:0000255" key="1">
    <source>
        <dbReference type="HAMAP-Rule" id="MF_00276"/>
    </source>
</evidence>
<dbReference type="EMBL" id="AE016877">
    <property type="protein sequence ID" value="AAP07746.1"/>
    <property type="molecule type" value="Genomic_DNA"/>
</dbReference>
<dbReference type="RefSeq" id="NP_830545.1">
    <property type="nucleotide sequence ID" value="NC_004722.1"/>
</dbReference>
<dbReference type="RefSeq" id="WP_000412605.1">
    <property type="nucleotide sequence ID" value="NC_004722.1"/>
</dbReference>
<dbReference type="SMR" id="Q81HP9"/>
<dbReference type="STRING" id="226900.BC_0755"/>
<dbReference type="KEGG" id="bce:BC0755"/>
<dbReference type="PATRIC" id="fig|226900.8.peg.697"/>
<dbReference type="HOGENOM" id="CLU_077094_1_0_9"/>
<dbReference type="OrthoDB" id="9809491at2"/>
<dbReference type="Proteomes" id="UP000001417">
    <property type="component" value="Chromosome"/>
</dbReference>
<dbReference type="GO" id="GO:0005886">
    <property type="term" value="C:plasma membrane"/>
    <property type="evidence" value="ECO:0007669"/>
    <property type="project" value="UniProtKB-SubCell"/>
</dbReference>
<dbReference type="GO" id="GO:0005524">
    <property type="term" value="F:ATP binding"/>
    <property type="evidence" value="ECO:0007669"/>
    <property type="project" value="UniProtKB-UniRule"/>
</dbReference>
<dbReference type="GO" id="GO:0008556">
    <property type="term" value="F:P-type potassium transmembrane transporter activity"/>
    <property type="evidence" value="ECO:0000318"/>
    <property type="project" value="GO_Central"/>
</dbReference>
<dbReference type="GO" id="GO:0071805">
    <property type="term" value="P:potassium ion transmembrane transport"/>
    <property type="evidence" value="ECO:0000318"/>
    <property type="project" value="GO_Central"/>
</dbReference>
<dbReference type="HAMAP" id="MF_00276">
    <property type="entry name" value="KdpC"/>
    <property type="match status" value="1"/>
</dbReference>
<dbReference type="InterPro" id="IPR003820">
    <property type="entry name" value="KdpC"/>
</dbReference>
<dbReference type="NCBIfam" id="TIGR00681">
    <property type="entry name" value="kdpC"/>
    <property type="match status" value="1"/>
</dbReference>
<dbReference type="NCBIfam" id="NF001454">
    <property type="entry name" value="PRK00315.1"/>
    <property type="match status" value="1"/>
</dbReference>
<dbReference type="NCBIfam" id="NF010601">
    <property type="entry name" value="PRK13997.1"/>
    <property type="match status" value="1"/>
</dbReference>
<dbReference type="PANTHER" id="PTHR30042">
    <property type="entry name" value="POTASSIUM-TRANSPORTING ATPASE C CHAIN"/>
    <property type="match status" value="1"/>
</dbReference>
<dbReference type="PANTHER" id="PTHR30042:SF2">
    <property type="entry name" value="POTASSIUM-TRANSPORTING ATPASE KDPC SUBUNIT"/>
    <property type="match status" value="1"/>
</dbReference>
<dbReference type="Pfam" id="PF02669">
    <property type="entry name" value="KdpC"/>
    <property type="match status" value="1"/>
</dbReference>
<dbReference type="PIRSF" id="PIRSF001296">
    <property type="entry name" value="K_ATPase_KdpC"/>
    <property type="match status" value="1"/>
</dbReference>
<comment type="function">
    <text evidence="1">Part of the high-affinity ATP-driven potassium transport (or Kdp) system, which catalyzes the hydrolysis of ATP coupled with the electrogenic transport of potassium into the cytoplasm. This subunit acts as a catalytic chaperone that increases the ATP-binding affinity of the ATP-hydrolyzing subunit KdpB by the formation of a transient KdpB/KdpC/ATP ternary complex.</text>
</comment>
<comment type="subunit">
    <text evidence="1">The system is composed of three essential subunits: KdpA, KdpB and KdpC.</text>
</comment>
<comment type="subcellular location">
    <subcellularLocation>
        <location evidence="1">Cell membrane</location>
        <topology evidence="1">Single-pass membrane protein</topology>
    </subcellularLocation>
</comment>
<comment type="similarity">
    <text evidence="1">Belongs to the KdpC family.</text>
</comment>
<sequence length="193" mass="21234">MEKKQSILSPIIRITFTFLVLCGLVYPLIVTGIAQAVMKDNADGSLIYNDKNEVIGSKLIGQNFTDPRYFQGRVSSIEYKAEASGSNNYAPSNPDLEKRVEKSIEEWKKQNPSVPVTEVPIDLVTNSGSGLDPDISPKAASVQVDRISKLTDIPKEKLNQLIKDQTEGAALGLFGETRVNVLKLNLALQELMK</sequence>
<organism>
    <name type="scientific">Bacillus cereus (strain ATCC 14579 / DSM 31 / CCUG 7414 / JCM 2152 / NBRC 15305 / NCIMB 9373 / NCTC 2599 / NRRL B-3711)</name>
    <dbReference type="NCBI Taxonomy" id="226900"/>
    <lineage>
        <taxon>Bacteria</taxon>
        <taxon>Bacillati</taxon>
        <taxon>Bacillota</taxon>
        <taxon>Bacilli</taxon>
        <taxon>Bacillales</taxon>
        <taxon>Bacillaceae</taxon>
        <taxon>Bacillus</taxon>
        <taxon>Bacillus cereus group</taxon>
    </lineage>
</organism>
<name>KDPC_BACCR</name>
<proteinExistence type="inferred from homology"/>